<feature type="chain" id="PRO_5000100339" description="Probable potassium transport system protein Kup 3">
    <location>
        <begin position="1"/>
        <end position="626"/>
    </location>
</feature>
<feature type="transmembrane region" description="Helical" evidence="1">
    <location>
        <begin position="10"/>
        <end position="30"/>
    </location>
</feature>
<feature type="transmembrane region" description="Helical" evidence="1">
    <location>
        <begin position="51"/>
        <end position="71"/>
    </location>
</feature>
<feature type="transmembrane region" description="Helical" evidence="1">
    <location>
        <begin position="107"/>
        <end position="127"/>
    </location>
</feature>
<feature type="transmembrane region" description="Helical" evidence="1">
    <location>
        <begin position="141"/>
        <end position="161"/>
    </location>
</feature>
<feature type="transmembrane region" description="Helical" evidence="1">
    <location>
        <begin position="173"/>
        <end position="193"/>
    </location>
</feature>
<feature type="transmembrane region" description="Helical" evidence="1">
    <location>
        <begin position="216"/>
        <end position="236"/>
    </location>
</feature>
<feature type="transmembrane region" description="Helical" evidence="1">
    <location>
        <begin position="251"/>
        <end position="271"/>
    </location>
</feature>
<feature type="transmembrane region" description="Helical" evidence="1">
    <location>
        <begin position="293"/>
        <end position="313"/>
    </location>
</feature>
<feature type="transmembrane region" description="Helical" evidence="1">
    <location>
        <begin position="341"/>
        <end position="361"/>
    </location>
</feature>
<feature type="transmembrane region" description="Helical" evidence="1">
    <location>
        <begin position="371"/>
        <end position="391"/>
    </location>
</feature>
<feature type="transmembrane region" description="Helical" evidence="1">
    <location>
        <begin position="401"/>
        <end position="421"/>
    </location>
</feature>
<feature type="transmembrane region" description="Helical" evidence="1">
    <location>
        <begin position="423"/>
        <end position="443"/>
    </location>
</feature>
<dbReference type="EMBL" id="CP000089">
    <property type="protein sequence ID" value="AAZ48285.1"/>
    <property type="molecule type" value="Genomic_DNA"/>
</dbReference>
<dbReference type="SMR" id="Q47A46"/>
<dbReference type="STRING" id="159087.Daro_3556"/>
<dbReference type="KEGG" id="dar:Daro_3556"/>
<dbReference type="eggNOG" id="COG3158">
    <property type="taxonomic scope" value="Bacteria"/>
</dbReference>
<dbReference type="HOGENOM" id="CLU_008142_4_2_4"/>
<dbReference type="OrthoDB" id="9805577at2"/>
<dbReference type="GO" id="GO:0005886">
    <property type="term" value="C:plasma membrane"/>
    <property type="evidence" value="ECO:0007669"/>
    <property type="project" value="UniProtKB-SubCell"/>
</dbReference>
<dbReference type="GO" id="GO:0015079">
    <property type="term" value="F:potassium ion transmembrane transporter activity"/>
    <property type="evidence" value="ECO:0007669"/>
    <property type="project" value="UniProtKB-UniRule"/>
</dbReference>
<dbReference type="GO" id="GO:0015293">
    <property type="term" value="F:symporter activity"/>
    <property type="evidence" value="ECO:0007669"/>
    <property type="project" value="UniProtKB-UniRule"/>
</dbReference>
<dbReference type="HAMAP" id="MF_01522">
    <property type="entry name" value="Kup"/>
    <property type="match status" value="1"/>
</dbReference>
<dbReference type="InterPro" id="IPR003855">
    <property type="entry name" value="K+_transporter"/>
</dbReference>
<dbReference type="InterPro" id="IPR053952">
    <property type="entry name" value="K_trans_C"/>
</dbReference>
<dbReference type="InterPro" id="IPR053951">
    <property type="entry name" value="K_trans_N"/>
</dbReference>
<dbReference type="InterPro" id="IPR023051">
    <property type="entry name" value="Kup"/>
</dbReference>
<dbReference type="PANTHER" id="PTHR30540:SF79">
    <property type="entry name" value="LOW AFFINITY POTASSIUM TRANSPORT SYSTEM PROTEIN KUP"/>
    <property type="match status" value="1"/>
</dbReference>
<dbReference type="PANTHER" id="PTHR30540">
    <property type="entry name" value="OSMOTIC STRESS POTASSIUM TRANSPORTER"/>
    <property type="match status" value="1"/>
</dbReference>
<dbReference type="Pfam" id="PF02705">
    <property type="entry name" value="K_trans"/>
    <property type="match status" value="1"/>
</dbReference>
<dbReference type="Pfam" id="PF22776">
    <property type="entry name" value="K_trans_C"/>
    <property type="match status" value="1"/>
</dbReference>
<sequence length="626" mass="67388">MHKEQDKKRLATLTLAALGVVYGDIGTSPLYSIKEVFGGAHHPVPITPDNVLGILSLFFWSLIIVVTLKYVSFIMRANNRGEGGIIALMTLAMHKGVAGSWQQKMLVLLGLFGAALFYGDGIITPAISVLSAVEGLEILTPAFKPYILPITLITLIGLFIFQRRGTASVGALFGPVMVIWFAVIAVLGAAAIVENPAVLAAVNPVHAFHFLTGNSLLGFFALGAVVLCITGGEALYADMGHFGAKPIQYAWLGYVLPALLLNYFGQGALLLADPSSVENPFYLLAPEWGRYPLVALATVATVIASQAVISGAFSITQQAIQLGYTPRLEIQHTSDEEIGQIYLPAINWMMLIAIIALVIEFGSSSNLAAAYGIAVTGTMLITNILAIAVAVRLWNWSPARAMLGALPFICIDLGFFLANSVKIADGGWFPLAFGLAVFILLTTWKRGRELLGLRLAADAMQLKSFVVDIAGSGIGRVPGTAIFMTPDPELVPHAMLHSLKHYKALHEQVVVMSVKVFDVPYVPDVDRVEVHRLSNNFSQVVVQYGFKDDPDIPAALALCGEAGLAIEPMDTSFFLGRETLIPKLGSEMAYWRELLFVAMFRNAGSATAFFKIPSNRVVELGSQVVL</sequence>
<accession>Q47A46</accession>
<protein>
    <recommendedName>
        <fullName evidence="1">Probable potassium transport system protein Kup 3</fullName>
    </recommendedName>
</protein>
<proteinExistence type="inferred from homology"/>
<name>KUP3_DECAR</name>
<evidence type="ECO:0000255" key="1">
    <source>
        <dbReference type="HAMAP-Rule" id="MF_01522"/>
    </source>
</evidence>
<keyword id="KW-0997">Cell inner membrane</keyword>
<keyword id="KW-1003">Cell membrane</keyword>
<keyword id="KW-0406">Ion transport</keyword>
<keyword id="KW-0472">Membrane</keyword>
<keyword id="KW-0630">Potassium</keyword>
<keyword id="KW-0633">Potassium transport</keyword>
<keyword id="KW-0769">Symport</keyword>
<keyword id="KW-0812">Transmembrane</keyword>
<keyword id="KW-1133">Transmembrane helix</keyword>
<keyword id="KW-0813">Transport</keyword>
<comment type="function">
    <text evidence="1">Transport of potassium into the cell. Likely operates as a K(+):H(+) symporter.</text>
</comment>
<comment type="catalytic activity">
    <reaction evidence="1">
        <text>K(+)(in) + H(+)(in) = K(+)(out) + H(+)(out)</text>
        <dbReference type="Rhea" id="RHEA:28490"/>
        <dbReference type="ChEBI" id="CHEBI:15378"/>
        <dbReference type="ChEBI" id="CHEBI:29103"/>
    </reaction>
    <physiologicalReaction direction="right-to-left" evidence="1">
        <dbReference type="Rhea" id="RHEA:28492"/>
    </physiologicalReaction>
</comment>
<comment type="subcellular location">
    <subcellularLocation>
        <location evidence="1">Cell inner membrane</location>
        <topology evidence="1">Multi-pass membrane protein</topology>
    </subcellularLocation>
</comment>
<comment type="similarity">
    <text evidence="1">Belongs to the HAK/KUP transporter (TC 2.A.72) family.</text>
</comment>
<gene>
    <name evidence="1" type="primary">kup3</name>
    <name type="ordered locus">Daro_3556</name>
</gene>
<organism>
    <name type="scientific">Dechloromonas aromatica (strain RCB)</name>
    <dbReference type="NCBI Taxonomy" id="159087"/>
    <lineage>
        <taxon>Bacteria</taxon>
        <taxon>Pseudomonadati</taxon>
        <taxon>Pseudomonadota</taxon>
        <taxon>Betaproteobacteria</taxon>
        <taxon>Rhodocyclales</taxon>
        <taxon>Azonexaceae</taxon>
        <taxon>Dechloromonas</taxon>
    </lineage>
</organism>
<reference key="1">
    <citation type="journal article" date="2009" name="BMC Genomics">
        <title>Metabolic analysis of the soil microbe Dechloromonas aromatica str. RCB: indications of a surprisingly complex life-style and cryptic anaerobic pathways for aromatic degradation.</title>
        <authorList>
            <person name="Salinero K.K."/>
            <person name="Keller K."/>
            <person name="Feil W.S."/>
            <person name="Feil H."/>
            <person name="Trong S."/>
            <person name="Di Bartolo G."/>
            <person name="Lapidus A."/>
        </authorList>
    </citation>
    <scope>NUCLEOTIDE SEQUENCE [LARGE SCALE GENOMIC DNA]</scope>
    <source>
        <strain>RCB</strain>
    </source>
</reference>